<protein>
    <recommendedName>
        <fullName>Histone-lysine N-methyltransferase SUV39H2</fullName>
        <ecNumber>2.1.1.355</ecNumber>
    </recommendedName>
    <alternativeName>
        <fullName>Suppressor of variegation 3-9 homolog 2</fullName>
        <shortName>Su(var)3-9 homolog 2</shortName>
    </alternativeName>
</protein>
<sequence length="410" mass="46551">MAAAGAEAPGAWCVPCLVSLDTLQELCRKEKLTCKSIGITKRNLNNYEVEYLCDYKVVKDMEYYLVKWKGWPDSTNTWEPLQNLKCPLLLQQFFNDKHNYLSQVKKGKAITLKENHRALKPAVAEYIVKKAKQRIALQRWQDELNRRKTHKGMIFVENTVDLEGPPSDFYYINEYKPAPGISLVNEATFGCSCTDCFFEKCCPAEAGVLLAYNKNQQIKIPPGTPIYECNSRCQCGPDCPNRIVQKGTQYSLCIFRTSNGCGWGVKTLVKIKRMSFVMEYVGEVITSEEAERRGQLYDNKGITYLFDLDYESDEFTVDAARYGNVSHFVNHSCDPNLQVFNVFIDNLDTRLPRIALFSTRTINAGEELTFDYQMKGSGDVSSDSIDHSPAKKRARTVCKCGAVTCRGYLN</sequence>
<reference key="1">
    <citation type="submission" date="2005-10" db="EMBL/GenBank/DDBJ databases">
        <authorList>
            <consortium name="NIH - Mammalian Gene Collection (MGC) project"/>
        </authorList>
    </citation>
    <scope>NUCLEOTIDE SEQUENCE [LARGE SCALE MRNA]</scope>
    <source>
        <strain>Hereford</strain>
        <tissue>Thymus</tissue>
    </source>
</reference>
<name>SUV92_BOVIN</name>
<feature type="chain" id="PRO_0000281813" description="Histone-lysine N-methyltransferase SUV39H2">
    <location>
        <begin position="1"/>
        <end position="410"/>
    </location>
</feature>
<feature type="domain" description="Chromo" evidence="3">
    <location>
        <begin position="47"/>
        <end position="105"/>
    </location>
</feature>
<feature type="domain" description="Pre-SET" evidence="5">
    <location>
        <begin position="189"/>
        <end position="247"/>
    </location>
</feature>
<feature type="domain" description="SET" evidence="6">
    <location>
        <begin position="250"/>
        <end position="373"/>
    </location>
</feature>
<feature type="domain" description="Post-SET" evidence="4">
    <location>
        <begin position="394"/>
        <end position="410"/>
    </location>
</feature>
<feature type="binding site" evidence="1">
    <location>
        <position position="191"/>
    </location>
    <ligand>
        <name>Zn(2+)</name>
        <dbReference type="ChEBI" id="CHEBI:29105"/>
        <label>1</label>
    </ligand>
</feature>
<feature type="binding site" evidence="1">
    <location>
        <position position="191"/>
    </location>
    <ligand>
        <name>Zn(2+)</name>
        <dbReference type="ChEBI" id="CHEBI:29105"/>
        <label>2</label>
    </ligand>
</feature>
<feature type="binding site" evidence="1">
    <location>
        <position position="193"/>
    </location>
    <ligand>
        <name>Zn(2+)</name>
        <dbReference type="ChEBI" id="CHEBI:29105"/>
        <label>1</label>
    </ligand>
</feature>
<feature type="binding site" evidence="1">
    <location>
        <position position="196"/>
    </location>
    <ligand>
        <name>Zn(2+)</name>
        <dbReference type="ChEBI" id="CHEBI:29105"/>
        <label>1</label>
    </ligand>
</feature>
<feature type="binding site" evidence="1">
    <location>
        <position position="196"/>
    </location>
    <ligand>
        <name>Zn(2+)</name>
        <dbReference type="ChEBI" id="CHEBI:29105"/>
        <label>3</label>
    </ligand>
</feature>
<feature type="binding site" evidence="1">
    <location>
        <position position="201"/>
    </location>
    <ligand>
        <name>Zn(2+)</name>
        <dbReference type="ChEBI" id="CHEBI:29105"/>
        <label>1</label>
    </ligand>
</feature>
<feature type="binding site" evidence="1">
    <location>
        <position position="202"/>
    </location>
    <ligand>
        <name>Zn(2+)</name>
        <dbReference type="ChEBI" id="CHEBI:29105"/>
        <label>1</label>
    </ligand>
</feature>
<feature type="binding site" evidence="1">
    <location>
        <position position="202"/>
    </location>
    <ligand>
        <name>Zn(2+)</name>
        <dbReference type="ChEBI" id="CHEBI:29105"/>
        <label>2</label>
    </ligand>
</feature>
<feature type="binding site" evidence="1">
    <location>
        <position position="229"/>
    </location>
    <ligand>
        <name>Zn(2+)</name>
        <dbReference type="ChEBI" id="CHEBI:29105"/>
        <label>2</label>
    </ligand>
</feature>
<feature type="binding site" evidence="1">
    <location>
        <position position="229"/>
    </location>
    <ligand>
        <name>Zn(2+)</name>
        <dbReference type="ChEBI" id="CHEBI:29105"/>
        <label>3</label>
    </ligand>
</feature>
<feature type="binding site" evidence="1">
    <location>
        <position position="233"/>
    </location>
    <ligand>
        <name>Zn(2+)</name>
        <dbReference type="ChEBI" id="CHEBI:29105"/>
        <label>2</label>
    </ligand>
</feature>
<feature type="binding site" evidence="1">
    <location>
        <position position="235"/>
    </location>
    <ligand>
        <name>Zn(2+)</name>
        <dbReference type="ChEBI" id="CHEBI:29105"/>
        <label>3</label>
    </ligand>
</feature>
<feature type="binding site" evidence="1">
    <location>
        <position position="239"/>
    </location>
    <ligand>
        <name>Zn(2+)</name>
        <dbReference type="ChEBI" id="CHEBI:29105"/>
        <label>3</label>
    </ligand>
</feature>
<feature type="binding site" evidence="1">
    <location>
        <begin position="261"/>
        <end position="263"/>
    </location>
    <ligand>
        <name>S-adenosyl-L-methionine</name>
        <dbReference type="ChEBI" id="CHEBI:59789"/>
    </ligand>
</feature>
<feature type="binding site" evidence="6">
    <location>
        <position position="304"/>
    </location>
    <ligand>
        <name>S-adenosyl-L-methionine</name>
        <dbReference type="ChEBI" id="CHEBI:59789"/>
    </ligand>
</feature>
<feature type="binding site" evidence="1">
    <location>
        <begin position="330"/>
        <end position="331"/>
    </location>
    <ligand>
        <name>S-adenosyl-L-methionine</name>
        <dbReference type="ChEBI" id="CHEBI:59789"/>
    </ligand>
</feature>
<feature type="binding site" evidence="1">
    <location>
        <position position="333"/>
    </location>
    <ligand>
        <name>Zn(2+)</name>
        <dbReference type="ChEBI" id="CHEBI:29105"/>
        <label>4</label>
    </ligand>
</feature>
<feature type="binding site" evidence="1">
    <location>
        <position position="398"/>
    </location>
    <ligand>
        <name>Zn(2+)</name>
        <dbReference type="ChEBI" id="CHEBI:29105"/>
        <label>4</label>
    </ligand>
</feature>
<feature type="binding site" evidence="1">
    <location>
        <position position="400"/>
    </location>
    <ligand>
        <name>Zn(2+)</name>
        <dbReference type="ChEBI" id="CHEBI:29105"/>
        <label>4</label>
    </ligand>
</feature>
<feature type="binding site" evidence="1">
    <location>
        <position position="405"/>
    </location>
    <ligand>
        <name>Zn(2+)</name>
        <dbReference type="ChEBI" id="CHEBI:29105"/>
        <label>4</label>
    </ligand>
</feature>
<feature type="modified residue" description="Phosphoserine" evidence="2">
    <location>
        <position position="381"/>
    </location>
</feature>
<feature type="modified residue" description="Phosphoserine" evidence="2">
    <location>
        <position position="384"/>
    </location>
</feature>
<feature type="modified residue" description="Phosphoserine" evidence="2">
    <location>
        <position position="388"/>
    </location>
</feature>
<organism>
    <name type="scientific">Bos taurus</name>
    <name type="common">Bovine</name>
    <dbReference type="NCBI Taxonomy" id="9913"/>
    <lineage>
        <taxon>Eukaryota</taxon>
        <taxon>Metazoa</taxon>
        <taxon>Chordata</taxon>
        <taxon>Craniata</taxon>
        <taxon>Vertebrata</taxon>
        <taxon>Euteleostomi</taxon>
        <taxon>Mammalia</taxon>
        <taxon>Eutheria</taxon>
        <taxon>Laurasiatheria</taxon>
        <taxon>Artiodactyla</taxon>
        <taxon>Ruminantia</taxon>
        <taxon>Pecora</taxon>
        <taxon>Bovidae</taxon>
        <taxon>Bovinae</taxon>
        <taxon>Bos</taxon>
    </lineage>
</organism>
<keyword id="KW-0090">Biological rhythms</keyword>
<keyword id="KW-0131">Cell cycle</keyword>
<keyword id="KW-0137">Centromere</keyword>
<keyword id="KW-0156">Chromatin regulator</keyword>
<keyword id="KW-0158">Chromosome</keyword>
<keyword id="KW-0221">Differentiation</keyword>
<keyword id="KW-0479">Metal-binding</keyword>
<keyword id="KW-0489">Methyltransferase</keyword>
<keyword id="KW-0539">Nucleus</keyword>
<keyword id="KW-0597">Phosphoprotein</keyword>
<keyword id="KW-1185">Reference proteome</keyword>
<keyword id="KW-0678">Repressor</keyword>
<keyword id="KW-0949">S-adenosyl-L-methionine</keyword>
<keyword id="KW-0804">Transcription</keyword>
<keyword id="KW-0805">Transcription regulation</keyword>
<keyword id="KW-0808">Transferase</keyword>
<keyword id="KW-0832">Ubl conjugation</keyword>
<keyword id="KW-0862">Zinc</keyword>
<proteinExistence type="evidence at transcript level"/>
<comment type="function">
    <text evidence="1">Histone methyltransferase that specifically trimethylates 'Lys-9' of histone H3 using monomethylated H3 'Lys-9' as substrate. H3 'Lys-9' trimethylation represents a specific tag for epigenetic transcriptional repression by recruiting HP1 (CBX1, CBX3 and/or CBX5) proteins to methylated histones. Mainly functions in heterochromatin regions, thereby playing a central role in the establishment of constitutive heterochromatin at pericentric and telomere regions. H3 'Lys-9' trimethylation is also required to direct DNA methylation at pericentric repeats. SUV39H1 is targeted to histone H3 via its interaction with RB1 and is involved in many processes, such as cell cycle regulation, transcriptional repression and regulation of telomere length. May participate in regulation of higher-order chromatin organization during spermatogenesis. Recruited by the large PER complex to the E-box elements of the circadian target genes such as PER2 itself or PER1, contributes to the conversion of local chromatin to a heterochromatin-like repressive state through H3 'Lys-9' trimethylation (By similarity).</text>
</comment>
<comment type="catalytic activity">
    <reaction evidence="7">
        <text>L-lysyl(9)-[histone H3] + 3 S-adenosyl-L-methionine = N(6),N(6),N(6)-trimethyl-L-lysyl(9)-[histone H3] + 3 S-adenosyl-L-homocysteine + 3 H(+)</text>
        <dbReference type="Rhea" id="RHEA:60276"/>
        <dbReference type="Rhea" id="RHEA-COMP:15538"/>
        <dbReference type="Rhea" id="RHEA-COMP:15546"/>
        <dbReference type="ChEBI" id="CHEBI:15378"/>
        <dbReference type="ChEBI" id="CHEBI:29969"/>
        <dbReference type="ChEBI" id="CHEBI:57856"/>
        <dbReference type="ChEBI" id="CHEBI:59789"/>
        <dbReference type="ChEBI" id="CHEBI:61961"/>
        <dbReference type="EC" id="2.1.1.355"/>
    </reaction>
</comment>
<comment type="subunit">
    <text evidence="1">Interacts with SMAD5. The large PER complex involved in the histone methylation is composed of at least PER2, CBX3, TRIM28, SUV39H1 and/or SUV39H2; CBX3 mediates the formation of the complex (By similarity).</text>
</comment>
<comment type="subcellular location">
    <subcellularLocation>
        <location evidence="1">Nucleus</location>
    </subcellularLocation>
    <subcellularLocation>
        <location evidence="1">Chromosome</location>
        <location evidence="1">Centromere</location>
    </subcellularLocation>
    <text evidence="1">Associates with centromeric constitutive heterochromatin.</text>
</comment>
<comment type="domain">
    <text evidence="1">Although the SET domain contains the active site of enzymatic activity, both pre-SET and post-SET domains are required for methyltransferase activity. The SET domain also participates in stable binding to heterochromatin (By similarity).</text>
</comment>
<comment type="domain">
    <text evidence="1">In the pre-SET domain, Cys residues bind 3 zinc ions that are arranged in a triangular cluster; some of these Cys residues contribute to the binding of two zinc ions within the cluster.</text>
</comment>
<comment type="PTM">
    <text evidence="2">Ubiquitinated by the DCX(DCAF13) E3 ubiquitin ligase complex, leading to its degradation.</text>
</comment>
<comment type="similarity">
    <text evidence="7">Belongs to the class V-like SAM-binding methyltransferase superfamily. Histone-lysine methyltransferase family. Suvar3-9 subfamily.</text>
</comment>
<evidence type="ECO:0000250" key="1"/>
<evidence type="ECO:0000250" key="2">
    <source>
        <dbReference type="UniProtKB" id="Q9H5I1"/>
    </source>
</evidence>
<evidence type="ECO:0000255" key="3">
    <source>
        <dbReference type="PROSITE-ProRule" id="PRU00053"/>
    </source>
</evidence>
<evidence type="ECO:0000255" key="4">
    <source>
        <dbReference type="PROSITE-ProRule" id="PRU00155"/>
    </source>
</evidence>
<evidence type="ECO:0000255" key="5">
    <source>
        <dbReference type="PROSITE-ProRule" id="PRU00157"/>
    </source>
</evidence>
<evidence type="ECO:0000255" key="6">
    <source>
        <dbReference type="PROSITE-ProRule" id="PRU00190"/>
    </source>
</evidence>
<evidence type="ECO:0000255" key="7">
    <source>
        <dbReference type="PROSITE-ProRule" id="PRU00912"/>
    </source>
</evidence>
<dbReference type="EC" id="2.1.1.355"/>
<dbReference type="EMBL" id="BC108111">
    <property type="protein sequence ID" value="AAI08112.1"/>
    <property type="molecule type" value="mRNA"/>
</dbReference>
<dbReference type="RefSeq" id="NP_001032556.1">
    <property type="nucleotide sequence ID" value="NM_001037479.2"/>
</dbReference>
<dbReference type="SMR" id="Q32PH7"/>
<dbReference type="FunCoup" id="Q32PH7">
    <property type="interactions" value="1841"/>
</dbReference>
<dbReference type="STRING" id="9913.ENSBTAP00000013472"/>
<dbReference type="PaxDb" id="9913-ENSBTAP00000013472"/>
<dbReference type="GeneID" id="536936"/>
<dbReference type="KEGG" id="bta:536936"/>
<dbReference type="CTD" id="79723"/>
<dbReference type="eggNOG" id="KOG1082">
    <property type="taxonomic scope" value="Eukaryota"/>
</dbReference>
<dbReference type="HOGENOM" id="CLU_020840_8_0_1"/>
<dbReference type="InParanoid" id="Q32PH7"/>
<dbReference type="OrthoDB" id="308383at2759"/>
<dbReference type="TreeFam" id="TF106452"/>
<dbReference type="Proteomes" id="UP000009136">
    <property type="component" value="Unplaced"/>
</dbReference>
<dbReference type="GO" id="GO:0000775">
    <property type="term" value="C:chromosome, centromeric region"/>
    <property type="evidence" value="ECO:0007669"/>
    <property type="project" value="UniProtKB-SubCell"/>
</dbReference>
<dbReference type="GO" id="GO:0005634">
    <property type="term" value="C:nucleus"/>
    <property type="evidence" value="ECO:0000318"/>
    <property type="project" value="GO_Central"/>
</dbReference>
<dbReference type="GO" id="GO:0046974">
    <property type="term" value="F:histone H3K9 methyltransferase activity"/>
    <property type="evidence" value="ECO:0000318"/>
    <property type="project" value="GO_Central"/>
</dbReference>
<dbReference type="GO" id="GO:0140949">
    <property type="term" value="F:histone H3K9 trimethyltransferase activity"/>
    <property type="evidence" value="ECO:0007669"/>
    <property type="project" value="UniProtKB-EC"/>
</dbReference>
<dbReference type="GO" id="GO:0000976">
    <property type="term" value="F:transcription cis-regulatory region binding"/>
    <property type="evidence" value="ECO:0000250"/>
    <property type="project" value="UniProtKB"/>
</dbReference>
<dbReference type="GO" id="GO:0008270">
    <property type="term" value="F:zinc ion binding"/>
    <property type="evidence" value="ECO:0007669"/>
    <property type="project" value="InterPro"/>
</dbReference>
<dbReference type="GO" id="GO:0030154">
    <property type="term" value="P:cell differentiation"/>
    <property type="evidence" value="ECO:0007669"/>
    <property type="project" value="UniProtKB-KW"/>
</dbReference>
<dbReference type="GO" id="GO:0007623">
    <property type="term" value="P:circadian rhythm"/>
    <property type="evidence" value="ECO:0000250"/>
    <property type="project" value="UniProtKB"/>
</dbReference>
<dbReference type="GO" id="GO:0032259">
    <property type="term" value="P:methylation"/>
    <property type="evidence" value="ECO:0007669"/>
    <property type="project" value="UniProtKB-KW"/>
</dbReference>
<dbReference type="GO" id="GO:0045892">
    <property type="term" value="P:negative regulation of DNA-templated transcription"/>
    <property type="evidence" value="ECO:0000250"/>
    <property type="project" value="UniProtKB"/>
</dbReference>
<dbReference type="GO" id="GO:0045814">
    <property type="term" value="P:negative regulation of gene expression, epigenetic"/>
    <property type="evidence" value="ECO:0000250"/>
    <property type="project" value="UniProtKB"/>
</dbReference>
<dbReference type="CDD" id="cd18639">
    <property type="entry name" value="CD_SUV39H1_like"/>
    <property type="match status" value="1"/>
</dbReference>
<dbReference type="CDD" id="cd10532">
    <property type="entry name" value="SET_SUV39H2"/>
    <property type="match status" value="1"/>
</dbReference>
<dbReference type="FunFam" id="2.170.270.10:FF:000008">
    <property type="entry name" value="Histone-lysine N-methyltransferase"/>
    <property type="match status" value="1"/>
</dbReference>
<dbReference type="FunFam" id="2.40.50.40:FF:000016">
    <property type="entry name" value="Histone-lysine N-methyltransferase"/>
    <property type="match status" value="1"/>
</dbReference>
<dbReference type="Gene3D" id="2.40.50.40">
    <property type="match status" value="1"/>
</dbReference>
<dbReference type="Gene3D" id="2.170.270.10">
    <property type="entry name" value="SET domain"/>
    <property type="match status" value="1"/>
</dbReference>
<dbReference type="InterPro" id="IPR016197">
    <property type="entry name" value="Chromo-like_dom_sf"/>
</dbReference>
<dbReference type="InterPro" id="IPR000953">
    <property type="entry name" value="Chromo/chromo_shadow_dom"/>
</dbReference>
<dbReference type="InterPro" id="IPR023780">
    <property type="entry name" value="Chromo_domain"/>
</dbReference>
<dbReference type="InterPro" id="IPR023779">
    <property type="entry name" value="Chromodomain_CS"/>
</dbReference>
<dbReference type="InterPro" id="IPR011381">
    <property type="entry name" value="H3-K9_MeTrfase_SUV39H1/2-like"/>
</dbReference>
<dbReference type="InterPro" id="IPR050973">
    <property type="entry name" value="H3K9_Histone-Lys_N-MTase"/>
</dbReference>
<dbReference type="InterPro" id="IPR003616">
    <property type="entry name" value="Post-SET_dom"/>
</dbReference>
<dbReference type="InterPro" id="IPR007728">
    <property type="entry name" value="Pre-SET_dom"/>
</dbReference>
<dbReference type="InterPro" id="IPR001214">
    <property type="entry name" value="SET_dom"/>
</dbReference>
<dbReference type="InterPro" id="IPR046341">
    <property type="entry name" value="SET_dom_sf"/>
</dbReference>
<dbReference type="PANTHER" id="PTHR46223">
    <property type="entry name" value="HISTONE-LYSINE N-METHYLTRANSFERASE SUV39H"/>
    <property type="match status" value="1"/>
</dbReference>
<dbReference type="PANTHER" id="PTHR46223:SF2">
    <property type="entry name" value="HISTONE-LYSINE N-METHYLTRANSFERASE SUV39H2"/>
    <property type="match status" value="1"/>
</dbReference>
<dbReference type="Pfam" id="PF00385">
    <property type="entry name" value="Chromo"/>
    <property type="match status" value="1"/>
</dbReference>
<dbReference type="Pfam" id="PF05033">
    <property type="entry name" value="Pre-SET"/>
    <property type="match status" value="1"/>
</dbReference>
<dbReference type="Pfam" id="PF00856">
    <property type="entry name" value="SET"/>
    <property type="match status" value="1"/>
</dbReference>
<dbReference type="PIRSF" id="PIRSF009343">
    <property type="entry name" value="SUV39_SET"/>
    <property type="match status" value="1"/>
</dbReference>
<dbReference type="SMART" id="SM00298">
    <property type="entry name" value="CHROMO"/>
    <property type="match status" value="1"/>
</dbReference>
<dbReference type="SMART" id="SM00508">
    <property type="entry name" value="PostSET"/>
    <property type="match status" value="1"/>
</dbReference>
<dbReference type="SMART" id="SM00468">
    <property type="entry name" value="PreSET"/>
    <property type="match status" value="1"/>
</dbReference>
<dbReference type="SMART" id="SM00317">
    <property type="entry name" value="SET"/>
    <property type="match status" value="1"/>
</dbReference>
<dbReference type="SUPFAM" id="SSF54160">
    <property type="entry name" value="Chromo domain-like"/>
    <property type="match status" value="1"/>
</dbReference>
<dbReference type="SUPFAM" id="SSF82199">
    <property type="entry name" value="SET domain"/>
    <property type="match status" value="1"/>
</dbReference>
<dbReference type="PROSITE" id="PS00598">
    <property type="entry name" value="CHROMO_1"/>
    <property type="match status" value="1"/>
</dbReference>
<dbReference type="PROSITE" id="PS50013">
    <property type="entry name" value="CHROMO_2"/>
    <property type="match status" value="1"/>
</dbReference>
<dbReference type="PROSITE" id="PS50868">
    <property type="entry name" value="POST_SET"/>
    <property type="match status" value="1"/>
</dbReference>
<dbReference type="PROSITE" id="PS50867">
    <property type="entry name" value="PRE_SET"/>
    <property type="match status" value="1"/>
</dbReference>
<dbReference type="PROSITE" id="PS51579">
    <property type="entry name" value="SAM_MT43_SUVAR39_3"/>
    <property type="match status" value="1"/>
</dbReference>
<dbReference type="PROSITE" id="PS50280">
    <property type="entry name" value="SET"/>
    <property type="match status" value="1"/>
</dbReference>
<gene>
    <name type="primary">SUV39H2</name>
</gene>
<accession>Q32PH7</accession>